<dbReference type="EC" id="1.8.1.2" evidence="2"/>
<dbReference type="EMBL" id="AE005174">
    <property type="protein sequence ID" value="AAG57872.1"/>
    <property type="molecule type" value="Genomic_DNA"/>
</dbReference>
<dbReference type="EMBL" id="BA000007">
    <property type="protein sequence ID" value="BAB37042.1"/>
    <property type="molecule type" value="Genomic_DNA"/>
</dbReference>
<dbReference type="PIR" id="C91081">
    <property type="entry name" value="C91081"/>
</dbReference>
<dbReference type="PIR" id="D85926">
    <property type="entry name" value="D85926"/>
</dbReference>
<dbReference type="RefSeq" id="NP_311646.1">
    <property type="nucleotide sequence ID" value="NC_002695.1"/>
</dbReference>
<dbReference type="RefSeq" id="WP_000211937.1">
    <property type="nucleotide sequence ID" value="NZ_VOAI01000003.1"/>
</dbReference>
<dbReference type="SMR" id="Q8X7U1"/>
<dbReference type="STRING" id="155864.Z4074"/>
<dbReference type="GeneID" id="914659"/>
<dbReference type="KEGG" id="ece:Z4074"/>
<dbReference type="KEGG" id="ecs:ECs_3619"/>
<dbReference type="PATRIC" id="fig|386585.9.peg.3783"/>
<dbReference type="eggNOG" id="COG0369">
    <property type="taxonomic scope" value="Bacteria"/>
</dbReference>
<dbReference type="HOGENOM" id="CLU_001570_17_7_6"/>
<dbReference type="OMA" id="QKRYQRD"/>
<dbReference type="UniPathway" id="UPA00140">
    <property type="reaction ID" value="UER00207"/>
</dbReference>
<dbReference type="Proteomes" id="UP000000558">
    <property type="component" value="Chromosome"/>
</dbReference>
<dbReference type="Proteomes" id="UP000002519">
    <property type="component" value="Chromosome"/>
</dbReference>
<dbReference type="GO" id="GO:0005829">
    <property type="term" value="C:cytosol"/>
    <property type="evidence" value="ECO:0007669"/>
    <property type="project" value="TreeGrafter"/>
</dbReference>
<dbReference type="GO" id="GO:0050660">
    <property type="term" value="F:flavin adenine dinucleotide binding"/>
    <property type="evidence" value="ECO:0007669"/>
    <property type="project" value="InterPro"/>
</dbReference>
<dbReference type="GO" id="GO:0010181">
    <property type="term" value="F:FMN binding"/>
    <property type="evidence" value="ECO:0007669"/>
    <property type="project" value="InterPro"/>
</dbReference>
<dbReference type="GO" id="GO:0004783">
    <property type="term" value="F:sulfite reductase (NADPH) activity"/>
    <property type="evidence" value="ECO:0007669"/>
    <property type="project" value="UniProtKB-UniRule"/>
</dbReference>
<dbReference type="GO" id="GO:0019344">
    <property type="term" value="P:cysteine biosynthetic process"/>
    <property type="evidence" value="ECO:0007669"/>
    <property type="project" value="UniProtKB-KW"/>
</dbReference>
<dbReference type="GO" id="GO:0070814">
    <property type="term" value="P:hydrogen sulfide biosynthetic process"/>
    <property type="evidence" value="ECO:0007669"/>
    <property type="project" value="UniProtKB-UniRule"/>
</dbReference>
<dbReference type="GO" id="GO:0000103">
    <property type="term" value="P:sulfate assimilation"/>
    <property type="evidence" value="ECO:0007669"/>
    <property type="project" value="UniProtKB-UniRule"/>
</dbReference>
<dbReference type="CDD" id="cd06199">
    <property type="entry name" value="SiR"/>
    <property type="match status" value="1"/>
</dbReference>
<dbReference type="FunFam" id="3.40.50.80:FF:000001">
    <property type="entry name" value="NADPH--cytochrome P450 reductase 1"/>
    <property type="match status" value="1"/>
</dbReference>
<dbReference type="FunFam" id="1.20.990.10:FF:000004">
    <property type="entry name" value="Sulfite reductase [NADPH] flavoprotein alpha-component"/>
    <property type="match status" value="1"/>
</dbReference>
<dbReference type="FunFam" id="3.40.50.360:FF:000018">
    <property type="entry name" value="Sulfite reductase [NADPH] flavoprotein alpha-component"/>
    <property type="match status" value="1"/>
</dbReference>
<dbReference type="Gene3D" id="3.40.50.360">
    <property type="match status" value="1"/>
</dbReference>
<dbReference type="Gene3D" id="1.20.990.10">
    <property type="entry name" value="NADPH-cytochrome p450 Reductase, Chain A, domain 3"/>
    <property type="match status" value="1"/>
</dbReference>
<dbReference type="Gene3D" id="3.40.50.80">
    <property type="entry name" value="Nucleotide-binding domain of ferredoxin-NADP reductase (FNR) module"/>
    <property type="match status" value="1"/>
</dbReference>
<dbReference type="Gene3D" id="2.40.30.10">
    <property type="entry name" value="Translation factors"/>
    <property type="match status" value="1"/>
</dbReference>
<dbReference type="HAMAP" id="MF_01541">
    <property type="entry name" value="CysJ"/>
    <property type="match status" value="1"/>
</dbReference>
<dbReference type="InterPro" id="IPR010199">
    <property type="entry name" value="CysJ"/>
</dbReference>
<dbReference type="InterPro" id="IPR003097">
    <property type="entry name" value="CysJ-like_FAD-binding"/>
</dbReference>
<dbReference type="InterPro" id="IPR029758">
    <property type="entry name" value="CysJ_Proteobact"/>
</dbReference>
<dbReference type="InterPro" id="IPR017927">
    <property type="entry name" value="FAD-bd_FR_type"/>
</dbReference>
<dbReference type="InterPro" id="IPR001094">
    <property type="entry name" value="Flavdoxin-like"/>
</dbReference>
<dbReference type="InterPro" id="IPR008254">
    <property type="entry name" value="Flavodoxin/NO_synth"/>
</dbReference>
<dbReference type="InterPro" id="IPR001709">
    <property type="entry name" value="Flavoprot_Pyr_Nucl_cyt_Rdtase"/>
</dbReference>
<dbReference type="InterPro" id="IPR029039">
    <property type="entry name" value="Flavoprotein-like_sf"/>
</dbReference>
<dbReference type="InterPro" id="IPR039261">
    <property type="entry name" value="FNR_nucleotide-bd"/>
</dbReference>
<dbReference type="InterPro" id="IPR023173">
    <property type="entry name" value="NADPH_Cyt_P450_Rdtase_alpha"/>
</dbReference>
<dbReference type="InterPro" id="IPR001433">
    <property type="entry name" value="OxRdtase_FAD/NAD-bd"/>
</dbReference>
<dbReference type="InterPro" id="IPR017938">
    <property type="entry name" value="Riboflavin_synthase-like_b-brl"/>
</dbReference>
<dbReference type="NCBIfam" id="TIGR01931">
    <property type="entry name" value="cysJ"/>
    <property type="match status" value="1"/>
</dbReference>
<dbReference type="NCBIfam" id="NF004859">
    <property type="entry name" value="PRK06214.1"/>
    <property type="match status" value="1"/>
</dbReference>
<dbReference type="NCBIfam" id="NF008197">
    <property type="entry name" value="PRK10953.1"/>
    <property type="match status" value="1"/>
</dbReference>
<dbReference type="PANTHER" id="PTHR19384:SF128">
    <property type="entry name" value="NADPH OXIDOREDUCTASE A"/>
    <property type="match status" value="1"/>
</dbReference>
<dbReference type="PANTHER" id="PTHR19384">
    <property type="entry name" value="NITRIC OXIDE SYNTHASE-RELATED"/>
    <property type="match status" value="1"/>
</dbReference>
<dbReference type="Pfam" id="PF00667">
    <property type="entry name" value="FAD_binding_1"/>
    <property type="match status" value="1"/>
</dbReference>
<dbReference type="Pfam" id="PF00258">
    <property type="entry name" value="Flavodoxin_1"/>
    <property type="match status" value="1"/>
</dbReference>
<dbReference type="Pfam" id="PF00175">
    <property type="entry name" value="NAD_binding_1"/>
    <property type="match status" value="1"/>
</dbReference>
<dbReference type="PIRSF" id="PIRSF000207">
    <property type="entry name" value="SiR-FP_CysJ"/>
    <property type="match status" value="1"/>
</dbReference>
<dbReference type="PRINTS" id="PR00369">
    <property type="entry name" value="FLAVODOXIN"/>
</dbReference>
<dbReference type="PRINTS" id="PR00371">
    <property type="entry name" value="FPNCR"/>
</dbReference>
<dbReference type="SUPFAM" id="SSF52343">
    <property type="entry name" value="Ferredoxin reductase-like, C-terminal NADP-linked domain"/>
    <property type="match status" value="1"/>
</dbReference>
<dbReference type="SUPFAM" id="SSF52218">
    <property type="entry name" value="Flavoproteins"/>
    <property type="match status" value="1"/>
</dbReference>
<dbReference type="SUPFAM" id="SSF63380">
    <property type="entry name" value="Riboflavin synthase domain-like"/>
    <property type="match status" value="1"/>
</dbReference>
<dbReference type="PROSITE" id="PS51384">
    <property type="entry name" value="FAD_FR"/>
    <property type="match status" value="1"/>
</dbReference>
<dbReference type="PROSITE" id="PS50902">
    <property type="entry name" value="FLAVODOXIN_LIKE"/>
    <property type="match status" value="1"/>
</dbReference>
<protein>
    <recommendedName>
        <fullName evidence="2">Sulfite reductase [NADPH] flavoprotein alpha-component</fullName>
        <shortName evidence="2">SiR-FP</shortName>
        <ecNumber evidence="2">1.8.1.2</ecNumber>
    </recommendedName>
</protein>
<name>CYSJ_ECO57</name>
<accession>Q8X7U1</accession>
<accession>Q7AB91</accession>
<feature type="initiator methionine" description="Removed" evidence="1">
    <location>
        <position position="1"/>
    </location>
</feature>
<feature type="chain" id="PRO_0000199924" description="Sulfite reductase [NADPH] flavoprotein alpha-component">
    <location>
        <begin position="2"/>
        <end position="599"/>
    </location>
</feature>
<feature type="domain" description="Flavodoxin-like" evidence="2">
    <location>
        <begin position="64"/>
        <end position="202"/>
    </location>
</feature>
<feature type="domain" description="FAD-binding FR-type" evidence="2">
    <location>
        <begin position="234"/>
        <end position="448"/>
    </location>
</feature>
<feature type="binding site" evidence="2">
    <location>
        <begin position="70"/>
        <end position="75"/>
    </location>
    <ligand>
        <name>FMN</name>
        <dbReference type="ChEBI" id="CHEBI:58210"/>
    </ligand>
</feature>
<feature type="binding site" evidence="2">
    <location>
        <begin position="117"/>
        <end position="120"/>
    </location>
    <ligand>
        <name>FMN</name>
        <dbReference type="ChEBI" id="CHEBI:58210"/>
    </ligand>
</feature>
<feature type="binding site" evidence="2">
    <location>
        <begin position="153"/>
        <end position="162"/>
    </location>
    <ligand>
        <name>FMN</name>
        <dbReference type="ChEBI" id="CHEBI:58210"/>
    </ligand>
</feature>
<feature type="binding site" evidence="2">
    <location>
        <position position="322"/>
    </location>
    <ligand>
        <name>FAD</name>
        <dbReference type="ChEBI" id="CHEBI:57692"/>
    </ligand>
</feature>
<feature type="binding site" evidence="2">
    <location>
        <position position="356"/>
    </location>
    <ligand>
        <name>FAD</name>
        <dbReference type="ChEBI" id="CHEBI:57692"/>
    </ligand>
</feature>
<feature type="binding site" evidence="2">
    <location>
        <begin position="386"/>
        <end position="389"/>
    </location>
    <ligand>
        <name>FAD</name>
        <dbReference type="ChEBI" id="CHEBI:57692"/>
    </ligand>
</feature>
<feature type="binding site" evidence="2">
    <location>
        <begin position="404"/>
        <end position="406"/>
    </location>
    <ligand>
        <name>FAD</name>
        <dbReference type="ChEBI" id="CHEBI:57692"/>
    </ligand>
</feature>
<feature type="binding site" evidence="2">
    <location>
        <position position="410"/>
    </location>
    <ligand>
        <name>FAD</name>
        <dbReference type="ChEBI" id="CHEBI:57692"/>
    </ligand>
</feature>
<feature type="binding site" evidence="2">
    <location>
        <begin position="419"/>
        <end position="422"/>
    </location>
    <ligand>
        <name>FAD</name>
        <dbReference type="ChEBI" id="CHEBI:57692"/>
    </ligand>
</feature>
<feature type="binding site" evidence="2">
    <location>
        <begin position="519"/>
        <end position="520"/>
    </location>
    <ligand>
        <name>NADP(+)</name>
        <dbReference type="ChEBI" id="CHEBI:58349"/>
    </ligand>
</feature>
<feature type="binding site" evidence="2">
    <location>
        <begin position="525"/>
        <end position="529"/>
    </location>
    <ligand>
        <name>NADP(+)</name>
        <dbReference type="ChEBI" id="CHEBI:58349"/>
    </ligand>
</feature>
<feature type="binding site" evidence="2">
    <location>
        <position position="561"/>
    </location>
    <ligand>
        <name>NADP(+)</name>
        <dbReference type="ChEBI" id="CHEBI:58349"/>
    </ligand>
</feature>
<feature type="binding site" evidence="2">
    <location>
        <position position="599"/>
    </location>
    <ligand>
        <name>FAD</name>
        <dbReference type="ChEBI" id="CHEBI:57692"/>
    </ligand>
</feature>
<comment type="function">
    <text evidence="2">Component of the sulfite reductase complex that catalyzes the 6-electron reduction of sulfite to sulfide. This is one of several activities required for the biosynthesis of L-cysteine from sulfate. The flavoprotein component catalyzes the electron flow from NADPH -&gt; FAD -&gt; FMN to the hemoprotein component.</text>
</comment>
<comment type="catalytic activity">
    <reaction evidence="2">
        <text>hydrogen sulfide + 3 NADP(+) + 3 H2O = sulfite + 3 NADPH + 4 H(+)</text>
        <dbReference type="Rhea" id="RHEA:13801"/>
        <dbReference type="ChEBI" id="CHEBI:15377"/>
        <dbReference type="ChEBI" id="CHEBI:15378"/>
        <dbReference type="ChEBI" id="CHEBI:17359"/>
        <dbReference type="ChEBI" id="CHEBI:29919"/>
        <dbReference type="ChEBI" id="CHEBI:57783"/>
        <dbReference type="ChEBI" id="CHEBI:58349"/>
        <dbReference type="EC" id="1.8.1.2"/>
    </reaction>
</comment>
<comment type="cofactor">
    <cofactor evidence="2">
        <name>FAD</name>
        <dbReference type="ChEBI" id="CHEBI:57692"/>
    </cofactor>
    <text evidence="2">Binds 1 FAD per subunit.</text>
</comment>
<comment type="cofactor">
    <cofactor evidence="2">
        <name>FMN</name>
        <dbReference type="ChEBI" id="CHEBI:58210"/>
    </cofactor>
    <text evidence="2">Binds 1 FMN per subunit.</text>
</comment>
<comment type="pathway">
    <text evidence="2">Sulfur metabolism; hydrogen sulfide biosynthesis; hydrogen sulfide from sulfite (NADPH route): step 1/1.</text>
</comment>
<comment type="subunit">
    <text evidence="2">Alpha(8)-beta(8). The alpha component is a flavoprotein, the beta component is a hemoprotein.</text>
</comment>
<comment type="similarity">
    <text evidence="2">Belongs to the NADPH-dependent sulphite reductase flavoprotein subunit CysJ family.</text>
</comment>
<comment type="similarity">
    <text evidence="2">In the N-terminal section; belongs to the flavodoxin family.</text>
</comment>
<comment type="similarity">
    <text evidence="2">In the C-terminal section; belongs to the flavoprotein pyridine nucleotide cytochrome reductase family.</text>
</comment>
<gene>
    <name evidence="2" type="primary">cysJ</name>
    <name type="ordered locus">Z4074</name>
    <name type="ordered locus">ECs3619</name>
</gene>
<reference key="1">
    <citation type="journal article" date="2001" name="Nature">
        <title>Genome sequence of enterohaemorrhagic Escherichia coli O157:H7.</title>
        <authorList>
            <person name="Perna N.T."/>
            <person name="Plunkett G. III"/>
            <person name="Burland V."/>
            <person name="Mau B."/>
            <person name="Glasner J.D."/>
            <person name="Rose D.J."/>
            <person name="Mayhew G.F."/>
            <person name="Evans P.S."/>
            <person name="Gregor J."/>
            <person name="Kirkpatrick H.A."/>
            <person name="Posfai G."/>
            <person name="Hackett J."/>
            <person name="Klink S."/>
            <person name="Boutin A."/>
            <person name="Shao Y."/>
            <person name="Miller L."/>
            <person name="Grotbeck E.J."/>
            <person name="Davis N.W."/>
            <person name="Lim A."/>
            <person name="Dimalanta E.T."/>
            <person name="Potamousis K."/>
            <person name="Apodaca J."/>
            <person name="Anantharaman T.S."/>
            <person name="Lin J."/>
            <person name="Yen G."/>
            <person name="Schwartz D.C."/>
            <person name="Welch R.A."/>
            <person name="Blattner F.R."/>
        </authorList>
    </citation>
    <scope>NUCLEOTIDE SEQUENCE [LARGE SCALE GENOMIC DNA]</scope>
    <source>
        <strain>O157:H7 / EDL933 / ATCC 700927 / EHEC</strain>
    </source>
</reference>
<reference key="2">
    <citation type="journal article" date="2001" name="DNA Res.">
        <title>Complete genome sequence of enterohemorrhagic Escherichia coli O157:H7 and genomic comparison with a laboratory strain K-12.</title>
        <authorList>
            <person name="Hayashi T."/>
            <person name="Makino K."/>
            <person name="Ohnishi M."/>
            <person name="Kurokawa K."/>
            <person name="Ishii K."/>
            <person name="Yokoyama K."/>
            <person name="Han C.-G."/>
            <person name="Ohtsubo E."/>
            <person name="Nakayama K."/>
            <person name="Murata T."/>
            <person name="Tanaka M."/>
            <person name="Tobe T."/>
            <person name="Iida T."/>
            <person name="Takami H."/>
            <person name="Honda T."/>
            <person name="Sasakawa C."/>
            <person name="Ogasawara N."/>
            <person name="Yasunaga T."/>
            <person name="Kuhara S."/>
            <person name="Shiba T."/>
            <person name="Hattori M."/>
            <person name="Shinagawa H."/>
        </authorList>
    </citation>
    <scope>NUCLEOTIDE SEQUENCE [LARGE SCALE GENOMIC DNA]</scope>
    <source>
        <strain>O157:H7 / Sakai / RIMD 0509952 / EHEC</strain>
    </source>
</reference>
<keyword id="KW-0028">Amino-acid biosynthesis</keyword>
<keyword id="KW-0198">Cysteine biosynthesis</keyword>
<keyword id="KW-0249">Electron transport</keyword>
<keyword id="KW-0274">FAD</keyword>
<keyword id="KW-0285">Flavoprotein</keyword>
<keyword id="KW-0288">FMN</keyword>
<keyword id="KW-0521">NADP</keyword>
<keyword id="KW-0560">Oxidoreductase</keyword>
<keyword id="KW-1185">Reference proteome</keyword>
<keyword id="KW-0813">Transport</keyword>
<sequence length="599" mass="66382">MTTQVPPSALLPLNPEQLARLQAATTDLTPTQLAWVSGYFWGVLNQQPAALAATPAPAAEMPGITIISASQTGNARRVAEALRDDLLTAKLNVKLVNAGDYKFKQIASEKLLIVVTSTQGEGEPPEEAVALHKFLFSKKAPKLENTAFAVFSLGDSSYEFFCQSGKDFDSKLAELGGERLLDRVDADVEYQAAASEWRARVVDALKSRAPVAAPSQSVATGVVNEIHTSPYSKDAPLVASLSVNQKITGRNSEKDVRHIEIDLGDSGLRYQPGDALGVWYQNDPALVKELVELLWLKGDEPVTVEGKTLPLNEALQWHFELTVNTANIVENYATLTRSETLLPLVGDKAKLQHYAATTPIVDMVRFSPAQLDAEALINLLRPLTPRLYSIASSQEEVENEVHVTVGVVRYDVEGRARAGGASSFLADRVEEEGEVRVFIEHNDNFRLPANPETPVIMIGPGTGIAPFRAFMQQRAADEAPGKNWLFFGNPHFTEDFLYQVEWQRYVKEGVLTRIDLAWSRDQKEKVYVQDKLREQGAELWRWINDGAHIYVCGDANRMAKDVEQALLEVIAEFGGMDTEAADEFLSELRVERRYQRDVY</sequence>
<evidence type="ECO:0000250" key="1"/>
<evidence type="ECO:0000255" key="2">
    <source>
        <dbReference type="HAMAP-Rule" id="MF_01541"/>
    </source>
</evidence>
<proteinExistence type="inferred from homology"/>
<organism>
    <name type="scientific">Escherichia coli O157:H7</name>
    <dbReference type="NCBI Taxonomy" id="83334"/>
    <lineage>
        <taxon>Bacteria</taxon>
        <taxon>Pseudomonadati</taxon>
        <taxon>Pseudomonadota</taxon>
        <taxon>Gammaproteobacteria</taxon>
        <taxon>Enterobacterales</taxon>
        <taxon>Enterobacteriaceae</taxon>
        <taxon>Escherichia</taxon>
    </lineage>
</organism>